<comment type="function">
    <text evidence="1">Required for receptor inhibition of inappropriately expressed a-factor receptor (STE3) in MAT a cells. Inhibits signaling by relocalizing the G protein beta-gamma (STE4-STE18) subunit to intracellular membranes. May also be a mechanism for the down-regulation of the mating pheromone response after the zygotic fusion event, promoting the transition of the new diploid cell to vegetative growth (By similarity).</text>
</comment>
<comment type="subcellular location">
    <subcellularLocation>
        <location evidence="1">Endomembrane system</location>
        <topology evidence="1">Multi-pass membrane protein</topology>
    </subcellularLocation>
</comment>
<comment type="induction">
    <text evidence="1">Induced by alpha-pheromone. Repressed by the ALPHA2-MCM1 repressor (By similarity).</text>
</comment>
<comment type="sequence caution" evidence="4">
    <conflict type="erroneous initiation">
        <sequence resource="EMBL-CDS" id="EDN63215"/>
    </conflict>
</comment>
<organism>
    <name type="scientific">Saccharomyces cerevisiae (strain YJM789)</name>
    <name type="common">Baker's yeast</name>
    <dbReference type="NCBI Taxonomy" id="307796"/>
    <lineage>
        <taxon>Eukaryota</taxon>
        <taxon>Fungi</taxon>
        <taxon>Dikarya</taxon>
        <taxon>Ascomycota</taxon>
        <taxon>Saccharomycotina</taxon>
        <taxon>Saccharomycetes</taxon>
        <taxon>Saccharomycetales</taxon>
        <taxon>Saccharomycetaceae</taxon>
        <taxon>Saccharomyces</taxon>
    </lineage>
</organism>
<name>ASG7_YEAS7</name>
<proteinExistence type="inferred from homology"/>
<accession>A6ZQG3</accession>
<feature type="chain" id="PRO_0000330044" description="Protein ASG7">
    <location>
        <begin position="1"/>
        <end position="209"/>
    </location>
</feature>
<feature type="topological domain" description="Lumenal" evidence="1">
    <location>
        <begin position="1"/>
        <end position="49"/>
    </location>
</feature>
<feature type="transmembrane region" description="Helical" evidence="3">
    <location>
        <begin position="50"/>
        <end position="70"/>
    </location>
</feature>
<feature type="topological domain" description="Cytoplasmic" evidence="1">
    <location>
        <begin position="71"/>
        <end position="184"/>
    </location>
</feature>
<feature type="transmembrane region" description="Helical" evidence="3">
    <location>
        <begin position="185"/>
        <end position="205"/>
    </location>
</feature>
<feature type="topological domain" description="Lumenal" evidence="1">
    <location>
        <begin position="206"/>
        <end position="209"/>
    </location>
</feature>
<feature type="modified residue" description="Phosphoserine" evidence="2">
    <location>
        <position position="121"/>
    </location>
</feature>
<feature type="modified residue" description="Phosphoserine" evidence="2">
    <location>
        <position position="123"/>
    </location>
</feature>
<feature type="modified residue" description="Phosphoserine" evidence="2">
    <location>
        <position position="125"/>
    </location>
</feature>
<feature type="modified residue" description="Phosphothreonine" evidence="2">
    <location>
        <position position="153"/>
    </location>
</feature>
<sequence>MTTLASSIEHKTKHLAAPFENDENTWMKKYCCQCKSCKMSVPVQPWLPRFFVFGILCPVFWLVNLLAWWFLQYWQPHELEFHDLQEDEYPGFYEYEAITKRTVIPLKEEVLQEIRVMQNFSDSNSEEYYESKDGMPSSFLNVNTEQVEDENDTLKKYRYAFLKKVAHDVLESHDLLRKTFRNWNLRSLLGLLIDSILIIFVVLLCKKSR</sequence>
<evidence type="ECO:0000250" key="1"/>
<evidence type="ECO:0000250" key="2">
    <source>
        <dbReference type="UniProtKB" id="P46993"/>
    </source>
</evidence>
<evidence type="ECO:0000255" key="3"/>
<evidence type="ECO:0000305" key="4"/>
<dbReference type="EMBL" id="AAFW02000044">
    <property type="protein sequence ID" value="EDN63215.1"/>
    <property type="status" value="ALT_INIT"/>
    <property type="molecule type" value="Genomic_DNA"/>
</dbReference>
<dbReference type="SMR" id="A6ZQG3"/>
<dbReference type="HOGENOM" id="CLU_114202_0_0_1"/>
<dbReference type="OrthoDB" id="26589at4893"/>
<dbReference type="Proteomes" id="UP000007060">
    <property type="component" value="Unassembled WGS sequence"/>
</dbReference>
<dbReference type="GO" id="GO:0012505">
    <property type="term" value="C:endomembrane system"/>
    <property type="evidence" value="ECO:0007669"/>
    <property type="project" value="UniProtKB-SubCell"/>
</dbReference>
<dbReference type="GO" id="GO:0016020">
    <property type="term" value="C:membrane"/>
    <property type="evidence" value="ECO:0007669"/>
    <property type="project" value="UniProtKB-KW"/>
</dbReference>
<gene>
    <name type="primary">ASG7</name>
    <name type="ORF">SCY_3124</name>
</gene>
<protein>
    <recommendedName>
        <fullName>Protein ASG7</fullName>
    </recommendedName>
    <alternativeName>
        <fullName>A-specific gene 7 protein</fullName>
    </alternativeName>
</protein>
<keyword id="KW-0472">Membrane</keyword>
<keyword id="KW-0597">Phosphoprotein</keyword>
<keyword id="KW-0812">Transmembrane</keyword>
<keyword id="KW-1133">Transmembrane helix</keyword>
<reference key="1">
    <citation type="journal article" date="2007" name="Proc. Natl. Acad. Sci. U.S.A.">
        <title>Genome sequencing and comparative analysis of Saccharomyces cerevisiae strain YJM789.</title>
        <authorList>
            <person name="Wei W."/>
            <person name="McCusker J.H."/>
            <person name="Hyman R.W."/>
            <person name="Jones T."/>
            <person name="Ning Y."/>
            <person name="Cao Z."/>
            <person name="Gu Z."/>
            <person name="Bruno D."/>
            <person name="Miranda M."/>
            <person name="Nguyen M."/>
            <person name="Wilhelmy J."/>
            <person name="Komp C."/>
            <person name="Tamse R."/>
            <person name="Wang X."/>
            <person name="Jia P."/>
            <person name="Luedi P."/>
            <person name="Oefner P.J."/>
            <person name="David L."/>
            <person name="Dietrich F.S."/>
            <person name="Li Y."/>
            <person name="Davis R.W."/>
            <person name="Steinmetz L.M."/>
        </authorList>
    </citation>
    <scope>NUCLEOTIDE SEQUENCE [LARGE SCALE GENOMIC DNA]</scope>
    <source>
        <strain>YJM789</strain>
    </source>
</reference>